<comment type="function">
    <text evidence="3">Probably participates in a plant defense mechanism. Not active against Gram-negative bacterium E.coli ATCC 700926 or Gram-positive bacterium S.aureus ATCC 12600 up to a concentration of 100 uM under low-salt conditions.</text>
</comment>
<comment type="tissue specificity">
    <text evidence="3">Expressed in root nodules but not in seed.</text>
</comment>
<comment type="domain">
    <text evidence="5">The presence of a 'disulfide through disulfide knot' structurally defines this protein as a knottin.</text>
</comment>
<comment type="PTM">
    <text evidence="3">Contains 3 disulfide bonds.</text>
</comment>
<comment type="PTM">
    <text evidence="2 3">This is a cyclic peptide.</text>
</comment>
<comment type="mass spectrometry"/>
<comment type="similarity">
    <text evidence="4">Belongs to the cyclotide family.</text>
</comment>
<sequence>DLQCAETCVHSPCIGPCYCKHGLICYRN</sequence>
<accession>C0HJS8</accession>
<reference evidence="5" key="1">
    <citation type="journal article" date="2016" name="FEBS J.">
        <title>Immunostimulating and Gram-negative-specific antibacterial cyclotides from the butterfly pea Clitoria ternatea.</title>
        <authorList>
            <person name="Nguyen K.N."/>
            <person name="Nguyen G.K."/>
            <person name="Nguyen P.Q."/>
            <person name="Ang K.H."/>
            <person name="Dedon P.C."/>
            <person name="Tam J.P."/>
        </authorList>
    </citation>
    <scope>PROTEIN SEQUENCE</scope>
    <scope>FUNCTION</scope>
    <scope>TISSUE SPECIFICITY</scope>
    <scope>CYCLIZATION</scope>
    <scope>PRESENCE OF DISULFIDE BONDS</scope>
    <scope>MASS SPECTROMETRY</scope>
    <scope>IDENTIFICATION BY MASS SPECTROMETRY</scope>
</reference>
<evidence type="ECO:0000250" key="1">
    <source>
        <dbReference type="UniProtKB" id="P58442"/>
    </source>
</evidence>
<evidence type="ECO:0000255" key="2">
    <source>
        <dbReference type="PROSITE-ProRule" id="PRU00395"/>
    </source>
</evidence>
<evidence type="ECO:0000269" key="3">
    <source>
    </source>
</evidence>
<evidence type="ECO:0000303" key="4">
    <source>
    </source>
</evidence>
<evidence type="ECO:0000305" key="5"/>
<protein>
    <recommendedName>
        <fullName evidence="4">Cliotide T21</fullName>
    </recommendedName>
    <alternativeName>
        <fullName evidence="4">Cyclotide cT21</fullName>
    </alternativeName>
</protein>
<feature type="peptide" id="PRO_0000436318" description="Cliotide T21" evidence="3">
    <location>
        <begin position="1"/>
        <end position="28"/>
    </location>
</feature>
<feature type="disulfide bond" evidence="1">
    <location>
        <begin position="4"/>
        <end position="17"/>
    </location>
</feature>
<feature type="disulfide bond" evidence="1">
    <location>
        <begin position="8"/>
        <end position="19"/>
    </location>
</feature>
<feature type="disulfide bond" evidence="1">
    <location>
        <begin position="13"/>
        <end position="25"/>
    </location>
</feature>
<feature type="cross-link" description="Cyclopeptide (Asp-Asn)" evidence="3">
    <location>
        <begin position="1"/>
        <end position="28"/>
    </location>
</feature>
<proteinExistence type="evidence at protein level"/>
<organism evidence="4">
    <name type="scientific">Clitoria ternatea</name>
    <name type="common">Butterfly pea</name>
    <dbReference type="NCBI Taxonomy" id="43366"/>
    <lineage>
        <taxon>Eukaryota</taxon>
        <taxon>Viridiplantae</taxon>
        <taxon>Streptophyta</taxon>
        <taxon>Embryophyta</taxon>
        <taxon>Tracheophyta</taxon>
        <taxon>Spermatophyta</taxon>
        <taxon>Magnoliopsida</taxon>
        <taxon>eudicotyledons</taxon>
        <taxon>Gunneridae</taxon>
        <taxon>Pentapetalae</taxon>
        <taxon>rosids</taxon>
        <taxon>fabids</taxon>
        <taxon>Fabales</taxon>
        <taxon>Fabaceae</taxon>
        <taxon>Papilionoideae</taxon>
        <taxon>50 kb inversion clade</taxon>
        <taxon>NPAAA clade</taxon>
        <taxon>indigoferoid/millettioid clade</taxon>
        <taxon>Phaseoleae</taxon>
        <taxon>Clitoria</taxon>
    </lineage>
</organism>
<dbReference type="SMR" id="C0HJS8"/>
<dbReference type="GO" id="GO:0006952">
    <property type="term" value="P:defense response"/>
    <property type="evidence" value="ECO:0007669"/>
    <property type="project" value="UniProtKB-KW"/>
</dbReference>
<dbReference type="InterPro" id="IPR005535">
    <property type="entry name" value="Cyclotide"/>
</dbReference>
<dbReference type="Pfam" id="PF03784">
    <property type="entry name" value="Cyclotide"/>
    <property type="match status" value="1"/>
</dbReference>
<name>CYC21_CLITE</name>
<keyword id="KW-0903">Direct protein sequencing</keyword>
<keyword id="KW-1015">Disulfide bond</keyword>
<keyword id="KW-0960">Knottin</keyword>
<keyword id="KW-0611">Plant defense</keyword>